<proteinExistence type="inferred from homology"/>
<dbReference type="EMBL" id="AE004439">
    <property type="protein sequence ID" value="AAK03473.1"/>
    <property type="molecule type" value="Genomic_DNA"/>
</dbReference>
<dbReference type="RefSeq" id="WP_005717908.1">
    <property type="nucleotide sequence ID" value="NC_002663.1"/>
</dbReference>
<dbReference type="SMR" id="Q9CL54"/>
<dbReference type="STRING" id="272843.PM1389"/>
<dbReference type="EnsemblBacteria" id="AAK03473">
    <property type="protein sequence ID" value="AAK03473"/>
    <property type="gene ID" value="PM1389"/>
</dbReference>
<dbReference type="GeneID" id="77207052"/>
<dbReference type="KEGG" id="pmu:PM1389"/>
<dbReference type="HOGENOM" id="CLU_074407_2_0_6"/>
<dbReference type="OrthoDB" id="9809073at2"/>
<dbReference type="Proteomes" id="UP000000809">
    <property type="component" value="Chromosome"/>
</dbReference>
<dbReference type="GO" id="GO:0022625">
    <property type="term" value="C:cytosolic large ribosomal subunit"/>
    <property type="evidence" value="ECO:0007669"/>
    <property type="project" value="TreeGrafter"/>
</dbReference>
<dbReference type="GO" id="GO:0003735">
    <property type="term" value="F:structural constituent of ribosome"/>
    <property type="evidence" value="ECO:0007669"/>
    <property type="project" value="InterPro"/>
</dbReference>
<dbReference type="GO" id="GO:0006412">
    <property type="term" value="P:translation"/>
    <property type="evidence" value="ECO:0007669"/>
    <property type="project" value="UniProtKB-UniRule"/>
</dbReference>
<dbReference type="FunFam" id="3.90.1030.10:FF:000001">
    <property type="entry name" value="50S ribosomal protein L17"/>
    <property type="match status" value="1"/>
</dbReference>
<dbReference type="Gene3D" id="3.90.1030.10">
    <property type="entry name" value="Ribosomal protein L17"/>
    <property type="match status" value="1"/>
</dbReference>
<dbReference type="HAMAP" id="MF_01368">
    <property type="entry name" value="Ribosomal_bL17"/>
    <property type="match status" value="1"/>
</dbReference>
<dbReference type="InterPro" id="IPR000456">
    <property type="entry name" value="Ribosomal_bL17"/>
</dbReference>
<dbReference type="InterPro" id="IPR047859">
    <property type="entry name" value="Ribosomal_bL17_CS"/>
</dbReference>
<dbReference type="InterPro" id="IPR036373">
    <property type="entry name" value="Ribosomal_bL17_sf"/>
</dbReference>
<dbReference type="NCBIfam" id="TIGR00059">
    <property type="entry name" value="L17"/>
    <property type="match status" value="1"/>
</dbReference>
<dbReference type="PANTHER" id="PTHR14413:SF16">
    <property type="entry name" value="LARGE RIBOSOMAL SUBUNIT PROTEIN BL17M"/>
    <property type="match status" value="1"/>
</dbReference>
<dbReference type="PANTHER" id="PTHR14413">
    <property type="entry name" value="RIBOSOMAL PROTEIN L17"/>
    <property type="match status" value="1"/>
</dbReference>
<dbReference type="Pfam" id="PF01196">
    <property type="entry name" value="Ribosomal_L17"/>
    <property type="match status" value="1"/>
</dbReference>
<dbReference type="SUPFAM" id="SSF64263">
    <property type="entry name" value="Prokaryotic ribosomal protein L17"/>
    <property type="match status" value="1"/>
</dbReference>
<dbReference type="PROSITE" id="PS01167">
    <property type="entry name" value="RIBOSOMAL_L17"/>
    <property type="match status" value="1"/>
</dbReference>
<reference key="1">
    <citation type="journal article" date="2001" name="Proc. Natl. Acad. Sci. U.S.A.">
        <title>Complete genomic sequence of Pasteurella multocida Pm70.</title>
        <authorList>
            <person name="May B.J."/>
            <person name="Zhang Q."/>
            <person name="Li L.L."/>
            <person name="Paustian M.L."/>
            <person name="Whittam T.S."/>
            <person name="Kapur V."/>
        </authorList>
    </citation>
    <scope>NUCLEOTIDE SEQUENCE [LARGE SCALE GENOMIC DNA]</scope>
    <source>
        <strain>Pm70</strain>
    </source>
</reference>
<accession>Q9CL54</accession>
<organism>
    <name type="scientific">Pasteurella multocida (strain Pm70)</name>
    <dbReference type="NCBI Taxonomy" id="272843"/>
    <lineage>
        <taxon>Bacteria</taxon>
        <taxon>Pseudomonadati</taxon>
        <taxon>Pseudomonadota</taxon>
        <taxon>Gammaproteobacteria</taxon>
        <taxon>Pasteurellales</taxon>
        <taxon>Pasteurellaceae</taxon>
        <taxon>Pasteurella</taxon>
    </lineage>
</organism>
<feature type="chain" id="PRO_1000055901" description="Large ribosomal subunit protein bL17">
    <location>
        <begin position="1"/>
        <end position="129"/>
    </location>
</feature>
<keyword id="KW-1185">Reference proteome</keyword>
<keyword id="KW-0687">Ribonucleoprotein</keyword>
<keyword id="KW-0689">Ribosomal protein</keyword>
<protein>
    <recommendedName>
        <fullName evidence="1">Large ribosomal subunit protein bL17</fullName>
    </recommendedName>
    <alternativeName>
        <fullName evidence="2">50S ribosomal protein L17</fullName>
    </alternativeName>
</protein>
<gene>
    <name evidence="1" type="primary">rplQ</name>
    <name type="ordered locus">PM1389</name>
</gene>
<name>RL17_PASMU</name>
<comment type="subunit">
    <text evidence="1">Part of the 50S ribosomal subunit. Contacts protein L32.</text>
</comment>
<comment type="similarity">
    <text evidence="1">Belongs to the bacterial ribosomal protein bL17 family.</text>
</comment>
<sequence>MRHRKSGRQLNRNSSHRQAMFRNMASSLVSHEIIKTTLPKAKELRRVVEPLITLAKVDSVANRRLAFARTRNIETVAKLFNELGPRFAQRAGGYTRILKCGFRTGDNAPMAYIELVDRPEVAAEEATAE</sequence>
<evidence type="ECO:0000255" key="1">
    <source>
        <dbReference type="HAMAP-Rule" id="MF_01368"/>
    </source>
</evidence>
<evidence type="ECO:0000305" key="2"/>